<organism>
    <name type="scientific">Desulforudis audaxviator (strain MP104C)</name>
    <dbReference type="NCBI Taxonomy" id="477974"/>
    <lineage>
        <taxon>Bacteria</taxon>
        <taxon>Bacillati</taxon>
        <taxon>Bacillota</taxon>
        <taxon>Clostridia</taxon>
        <taxon>Thermoanaerobacterales</taxon>
        <taxon>Candidatus Desulforudaceae</taxon>
        <taxon>Candidatus Desulforudis</taxon>
    </lineage>
</organism>
<accession>B1I1M9</accession>
<proteinExistence type="inferred from homology"/>
<name>RPOC_DESAP</name>
<protein>
    <recommendedName>
        <fullName evidence="1">DNA-directed RNA polymerase subunit beta'</fullName>
        <shortName evidence="1">RNAP subunit beta'</shortName>
        <ecNumber evidence="1">2.7.7.6</ecNumber>
    </recommendedName>
    <alternativeName>
        <fullName evidence="1">RNA polymerase subunit beta'</fullName>
    </alternativeName>
    <alternativeName>
        <fullName evidence="1">Transcriptase subunit beta'</fullName>
    </alternativeName>
</protein>
<keyword id="KW-0240">DNA-directed RNA polymerase</keyword>
<keyword id="KW-0460">Magnesium</keyword>
<keyword id="KW-0479">Metal-binding</keyword>
<keyword id="KW-0548">Nucleotidyltransferase</keyword>
<keyword id="KW-1185">Reference proteome</keyword>
<keyword id="KW-0804">Transcription</keyword>
<keyword id="KW-0808">Transferase</keyword>
<keyword id="KW-0862">Zinc</keyword>
<sequence length="1154" mass="129281">MLDLTNFDRIRIGLASADHITTWSHGEVKKPETINYRTLKPERDGLFCERIFGPTRDWECYCGKYKRVRYKGIVCDRCGVEVTRSKVRRERLGHIKLAAPVSHIWYFKGIPSRMGLLLDMSPRALEKVLYFVSYIVTNPGDTPLFKKQLLTEQEYREFRDKYGTDFQAAMGAEAILQLLDEIDLNELAAELRQEIRDVTGQRRIRAIRRLEVVESFRKSQNSPSWMIMQVLPVIPPELRPMVQLDGGRFATSDLNDLYRRVINRNNRLKRLLELGAPDIIVRNEKRMLQEAVDALIDNGRRGRPVTGPGNRPLKSLSDMLKGKQGRFRQNLLGKRVDYSGRSVIVVGPSLKLHQCGLPKEMALELFKPFVMKRLVGDGHAHNIKSAKRKVERVRPEVWDVLEDVIKEHPVLLNRAPTLHRLGIQAFEPVLVEGRAIQIHPLVCTAYNADFDGDQMAVHVPLSAEAQAEARLLMLSTYNILNPKDGRPVTIPTQDMVLGIYYLTIERPGARGEGKAFRDVNEAILAYESGVIELHALVKVNMGDGRLLETTVGRLIFNEAMPPEISYINKLVDKKELSLIVDRCYRRLGYKRTAELLDGIKQLGFKYATQGGLTIGMNDIVIPERKKEILGEAESHVEMIEDQYRRGLITFDEKYRQTIETWNRATELVTQELLNTLDRFNPVYMMATSGARGNIQQIRQLAGLRGLMADPSGRIIDLPIKANFREGLSVLEYFISTHGARKGLADTALRTADSGYLTRRLVDVAQDVIVREIDCGTDEYVEVGDVRDGTEIIEMLQDRIVGRTAARAIVHPETGAVIVDADEEILEEAAEKIVAAGIKKVAIRSVFTCKTRHGVCKKCYGRNLATGRVVDIGEAIGIIAAQSIGEPGTQLTMRTFHTGGVAGEDITQGLPRVEELFEARRPKGQAIVAEIDGLVEVREVKGRREIEIRGENGERVQYAIPFGARLKVQNGDRVEAGDELSEGSVNPHDLLKIKGPAAVQQYLLREVQRVYRMQGVDINDKHIEVVIRQMLRKVKIDEPGDTEFLPGSLVDILDLEEENRRVEAAGGSPATSKSVLLGITKASLATDSFLSAASFQETTRVLTEAAIKGKVDPLLGLKENVIIGKLIPAGTGMNRYRSVEVDPAVETPAKEVPTH</sequence>
<evidence type="ECO:0000255" key="1">
    <source>
        <dbReference type="HAMAP-Rule" id="MF_01322"/>
    </source>
</evidence>
<comment type="function">
    <text evidence="1">DNA-dependent RNA polymerase catalyzes the transcription of DNA into RNA using the four ribonucleoside triphosphates as substrates.</text>
</comment>
<comment type="catalytic activity">
    <reaction evidence="1">
        <text>RNA(n) + a ribonucleoside 5'-triphosphate = RNA(n+1) + diphosphate</text>
        <dbReference type="Rhea" id="RHEA:21248"/>
        <dbReference type="Rhea" id="RHEA-COMP:14527"/>
        <dbReference type="Rhea" id="RHEA-COMP:17342"/>
        <dbReference type="ChEBI" id="CHEBI:33019"/>
        <dbReference type="ChEBI" id="CHEBI:61557"/>
        <dbReference type="ChEBI" id="CHEBI:140395"/>
        <dbReference type="EC" id="2.7.7.6"/>
    </reaction>
</comment>
<comment type="cofactor">
    <cofactor evidence="1">
        <name>Mg(2+)</name>
        <dbReference type="ChEBI" id="CHEBI:18420"/>
    </cofactor>
    <text evidence="1">Binds 1 Mg(2+) ion per subunit.</text>
</comment>
<comment type="cofactor">
    <cofactor evidence="1">
        <name>Zn(2+)</name>
        <dbReference type="ChEBI" id="CHEBI:29105"/>
    </cofactor>
    <text evidence="1">Binds 2 Zn(2+) ions per subunit.</text>
</comment>
<comment type="subunit">
    <text evidence="1">The RNAP catalytic core consists of 2 alpha, 1 beta, 1 beta' and 1 omega subunit. When a sigma factor is associated with the core the holoenzyme is formed, which can initiate transcription.</text>
</comment>
<comment type="similarity">
    <text evidence="1">Belongs to the RNA polymerase beta' chain family.</text>
</comment>
<feature type="chain" id="PRO_0000353346" description="DNA-directed RNA polymerase subunit beta'">
    <location>
        <begin position="1"/>
        <end position="1154"/>
    </location>
</feature>
<feature type="binding site" evidence="1">
    <location>
        <position position="60"/>
    </location>
    <ligand>
        <name>Zn(2+)</name>
        <dbReference type="ChEBI" id="CHEBI:29105"/>
        <label>1</label>
    </ligand>
</feature>
<feature type="binding site" evidence="1">
    <location>
        <position position="62"/>
    </location>
    <ligand>
        <name>Zn(2+)</name>
        <dbReference type="ChEBI" id="CHEBI:29105"/>
        <label>1</label>
    </ligand>
</feature>
<feature type="binding site" evidence="1">
    <location>
        <position position="75"/>
    </location>
    <ligand>
        <name>Zn(2+)</name>
        <dbReference type="ChEBI" id="CHEBI:29105"/>
        <label>1</label>
    </ligand>
</feature>
<feature type="binding site" evidence="1">
    <location>
        <position position="78"/>
    </location>
    <ligand>
        <name>Zn(2+)</name>
        <dbReference type="ChEBI" id="CHEBI:29105"/>
        <label>1</label>
    </ligand>
</feature>
<feature type="binding site" evidence="1">
    <location>
        <position position="449"/>
    </location>
    <ligand>
        <name>Mg(2+)</name>
        <dbReference type="ChEBI" id="CHEBI:18420"/>
    </ligand>
</feature>
<feature type="binding site" evidence="1">
    <location>
        <position position="451"/>
    </location>
    <ligand>
        <name>Mg(2+)</name>
        <dbReference type="ChEBI" id="CHEBI:18420"/>
    </ligand>
</feature>
<feature type="binding site" evidence="1">
    <location>
        <position position="453"/>
    </location>
    <ligand>
        <name>Mg(2+)</name>
        <dbReference type="ChEBI" id="CHEBI:18420"/>
    </ligand>
</feature>
<feature type="binding site" evidence="1">
    <location>
        <position position="774"/>
    </location>
    <ligand>
        <name>Zn(2+)</name>
        <dbReference type="ChEBI" id="CHEBI:29105"/>
        <label>2</label>
    </ligand>
</feature>
<feature type="binding site" evidence="1">
    <location>
        <position position="848"/>
    </location>
    <ligand>
        <name>Zn(2+)</name>
        <dbReference type="ChEBI" id="CHEBI:29105"/>
        <label>2</label>
    </ligand>
</feature>
<feature type="binding site" evidence="1">
    <location>
        <position position="855"/>
    </location>
    <ligand>
        <name>Zn(2+)</name>
        <dbReference type="ChEBI" id="CHEBI:29105"/>
        <label>2</label>
    </ligand>
</feature>
<feature type="binding site" evidence="1">
    <location>
        <position position="858"/>
    </location>
    <ligand>
        <name>Zn(2+)</name>
        <dbReference type="ChEBI" id="CHEBI:29105"/>
        <label>2</label>
    </ligand>
</feature>
<dbReference type="EC" id="2.7.7.6" evidence="1"/>
<dbReference type="EMBL" id="CP000860">
    <property type="protein sequence ID" value="ACA58778.1"/>
    <property type="molecule type" value="Genomic_DNA"/>
</dbReference>
<dbReference type="RefSeq" id="WP_012301371.1">
    <property type="nucleotide sequence ID" value="NC_010424.1"/>
</dbReference>
<dbReference type="SMR" id="B1I1M9"/>
<dbReference type="STRING" id="477974.Daud_0217"/>
<dbReference type="KEGG" id="dau:Daud_0217"/>
<dbReference type="eggNOG" id="COG0086">
    <property type="taxonomic scope" value="Bacteria"/>
</dbReference>
<dbReference type="HOGENOM" id="CLU_000524_3_0_9"/>
<dbReference type="OrthoDB" id="9815296at2"/>
<dbReference type="Proteomes" id="UP000008544">
    <property type="component" value="Chromosome"/>
</dbReference>
<dbReference type="GO" id="GO:0000428">
    <property type="term" value="C:DNA-directed RNA polymerase complex"/>
    <property type="evidence" value="ECO:0007669"/>
    <property type="project" value="UniProtKB-KW"/>
</dbReference>
<dbReference type="GO" id="GO:0003677">
    <property type="term" value="F:DNA binding"/>
    <property type="evidence" value="ECO:0007669"/>
    <property type="project" value="UniProtKB-UniRule"/>
</dbReference>
<dbReference type="GO" id="GO:0003899">
    <property type="term" value="F:DNA-directed RNA polymerase activity"/>
    <property type="evidence" value="ECO:0007669"/>
    <property type="project" value="UniProtKB-UniRule"/>
</dbReference>
<dbReference type="GO" id="GO:0000287">
    <property type="term" value="F:magnesium ion binding"/>
    <property type="evidence" value="ECO:0007669"/>
    <property type="project" value="UniProtKB-UniRule"/>
</dbReference>
<dbReference type="GO" id="GO:0008270">
    <property type="term" value="F:zinc ion binding"/>
    <property type="evidence" value="ECO:0007669"/>
    <property type="project" value="UniProtKB-UniRule"/>
</dbReference>
<dbReference type="GO" id="GO:0006351">
    <property type="term" value="P:DNA-templated transcription"/>
    <property type="evidence" value="ECO:0007669"/>
    <property type="project" value="UniProtKB-UniRule"/>
</dbReference>
<dbReference type="CDD" id="cd02655">
    <property type="entry name" value="RNAP_beta'_C"/>
    <property type="match status" value="1"/>
</dbReference>
<dbReference type="CDD" id="cd01609">
    <property type="entry name" value="RNAP_beta'_N"/>
    <property type="match status" value="1"/>
</dbReference>
<dbReference type="FunFam" id="1.10.150.390:FF:000002">
    <property type="entry name" value="DNA-directed RNA polymerase subunit beta"/>
    <property type="match status" value="1"/>
</dbReference>
<dbReference type="FunFam" id="1.10.40.90:FF:000001">
    <property type="entry name" value="DNA-directed RNA polymerase subunit beta"/>
    <property type="match status" value="1"/>
</dbReference>
<dbReference type="FunFam" id="4.10.860.120:FF:000001">
    <property type="entry name" value="DNA-directed RNA polymerase subunit beta"/>
    <property type="match status" value="1"/>
</dbReference>
<dbReference type="Gene3D" id="1.10.132.30">
    <property type="match status" value="1"/>
</dbReference>
<dbReference type="Gene3D" id="1.10.150.390">
    <property type="match status" value="1"/>
</dbReference>
<dbReference type="Gene3D" id="1.10.1790.20">
    <property type="match status" value="1"/>
</dbReference>
<dbReference type="Gene3D" id="1.10.40.90">
    <property type="match status" value="1"/>
</dbReference>
<dbReference type="Gene3D" id="2.40.40.20">
    <property type="match status" value="1"/>
</dbReference>
<dbReference type="Gene3D" id="2.40.50.100">
    <property type="match status" value="1"/>
</dbReference>
<dbReference type="Gene3D" id="4.10.860.120">
    <property type="entry name" value="RNA polymerase II, clamp domain"/>
    <property type="match status" value="1"/>
</dbReference>
<dbReference type="Gene3D" id="1.10.274.100">
    <property type="entry name" value="RNA polymerase Rpb1, domain 3"/>
    <property type="match status" value="2"/>
</dbReference>
<dbReference type="HAMAP" id="MF_01322">
    <property type="entry name" value="RNApol_bact_RpoC"/>
    <property type="match status" value="1"/>
</dbReference>
<dbReference type="InterPro" id="IPR045867">
    <property type="entry name" value="DNA-dir_RpoC_beta_prime"/>
</dbReference>
<dbReference type="InterPro" id="IPR012754">
    <property type="entry name" value="DNA-dir_RpoC_beta_prime_bact"/>
</dbReference>
<dbReference type="InterPro" id="IPR000722">
    <property type="entry name" value="RNA_pol_asu"/>
</dbReference>
<dbReference type="InterPro" id="IPR006592">
    <property type="entry name" value="RNA_pol_N"/>
</dbReference>
<dbReference type="InterPro" id="IPR007080">
    <property type="entry name" value="RNA_pol_Rpb1_1"/>
</dbReference>
<dbReference type="InterPro" id="IPR007066">
    <property type="entry name" value="RNA_pol_Rpb1_3"/>
</dbReference>
<dbReference type="InterPro" id="IPR042102">
    <property type="entry name" value="RNA_pol_Rpb1_3_sf"/>
</dbReference>
<dbReference type="InterPro" id="IPR007083">
    <property type="entry name" value="RNA_pol_Rpb1_4"/>
</dbReference>
<dbReference type="InterPro" id="IPR007081">
    <property type="entry name" value="RNA_pol_Rpb1_5"/>
</dbReference>
<dbReference type="InterPro" id="IPR044893">
    <property type="entry name" value="RNA_pol_Rpb1_clamp_domain"/>
</dbReference>
<dbReference type="InterPro" id="IPR038120">
    <property type="entry name" value="Rpb1_funnel_sf"/>
</dbReference>
<dbReference type="NCBIfam" id="NF011498">
    <property type="entry name" value="PRK14906.1"/>
    <property type="match status" value="1"/>
</dbReference>
<dbReference type="NCBIfam" id="TIGR02386">
    <property type="entry name" value="rpoC_TIGR"/>
    <property type="match status" value="1"/>
</dbReference>
<dbReference type="PANTHER" id="PTHR19376">
    <property type="entry name" value="DNA-DIRECTED RNA POLYMERASE"/>
    <property type="match status" value="1"/>
</dbReference>
<dbReference type="PANTHER" id="PTHR19376:SF54">
    <property type="entry name" value="DNA-DIRECTED RNA POLYMERASE SUBUNIT BETA"/>
    <property type="match status" value="1"/>
</dbReference>
<dbReference type="Pfam" id="PF04997">
    <property type="entry name" value="RNA_pol_Rpb1_1"/>
    <property type="match status" value="1"/>
</dbReference>
<dbReference type="Pfam" id="PF00623">
    <property type="entry name" value="RNA_pol_Rpb1_2"/>
    <property type="match status" value="1"/>
</dbReference>
<dbReference type="Pfam" id="PF04983">
    <property type="entry name" value="RNA_pol_Rpb1_3"/>
    <property type="match status" value="1"/>
</dbReference>
<dbReference type="Pfam" id="PF05000">
    <property type="entry name" value="RNA_pol_Rpb1_4"/>
    <property type="match status" value="1"/>
</dbReference>
<dbReference type="Pfam" id="PF04998">
    <property type="entry name" value="RNA_pol_Rpb1_5"/>
    <property type="match status" value="1"/>
</dbReference>
<dbReference type="SMART" id="SM00663">
    <property type="entry name" value="RPOLA_N"/>
    <property type="match status" value="1"/>
</dbReference>
<dbReference type="SUPFAM" id="SSF64484">
    <property type="entry name" value="beta and beta-prime subunits of DNA dependent RNA-polymerase"/>
    <property type="match status" value="1"/>
</dbReference>
<reference key="1">
    <citation type="submission" date="2007-10" db="EMBL/GenBank/DDBJ databases">
        <title>Complete sequence of chromosome of Desulforudis audaxviator MP104C.</title>
        <authorList>
            <person name="Copeland A."/>
            <person name="Lucas S."/>
            <person name="Lapidus A."/>
            <person name="Barry K."/>
            <person name="Glavina del Rio T."/>
            <person name="Dalin E."/>
            <person name="Tice H."/>
            <person name="Bruce D."/>
            <person name="Pitluck S."/>
            <person name="Lowry S.R."/>
            <person name="Larimer F."/>
            <person name="Land M.L."/>
            <person name="Hauser L."/>
            <person name="Kyrpides N."/>
            <person name="Ivanova N.N."/>
            <person name="Richardson P."/>
        </authorList>
    </citation>
    <scope>NUCLEOTIDE SEQUENCE [LARGE SCALE GENOMIC DNA]</scope>
    <source>
        <strain>MP104C</strain>
    </source>
</reference>
<gene>
    <name evidence="1" type="primary">rpoC</name>
    <name type="ordered locus">Daud_0217</name>
</gene>